<reference key="1">
    <citation type="journal article" date="2004" name="Proc. Natl. Acad. Sci. U.S.A.">
        <title>The complete genomic sequence of Nocardia farcinica IFM 10152.</title>
        <authorList>
            <person name="Ishikawa J."/>
            <person name="Yamashita A."/>
            <person name="Mikami Y."/>
            <person name="Hoshino Y."/>
            <person name="Kurita H."/>
            <person name="Hotta K."/>
            <person name="Shiba T."/>
            <person name="Hattori M."/>
        </authorList>
    </citation>
    <scope>NUCLEOTIDE SEQUENCE [LARGE SCALE GENOMIC DNA]</scope>
    <source>
        <strain>IFM 10152</strain>
    </source>
</reference>
<comment type="function">
    <text evidence="1">Involved in the binding of tRNA to the ribosomes.</text>
</comment>
<comment type="subunit">
    <text evidence="1">Part of the 30S ribosomal subunit.</text>
</comment>
<comment type="similarity">
    <text evidence="1">Belongs to the universal ribosomal protein uS10 family.</text>
</comment>
<organism>
    <name type="scientific">Nocardia farcinica (strain IFM 10152)</name>
    <dbReference type="NCBI Taxonomy" id="247156"/>
    <lineage>
        <taxon>Bacteria</taxon>
        <taxon>Bacillati</taxon>
        <taxon>Actinomycetota</taxon>
        <taxon>Actinomycetes</taxon>
        <taxon>Mycobacteriales</taxon>
        <taxon>Nocardiaceae</taxon>
        <taxon>Nocardia</taxon>
    </lineage>
</organism>
<name>RS10_NOCFA</name>
<feature type="chain" id="PRO_0000237072" description="Small ribosomal subunit protein uS10">
    <location>
        <begin position="1"/>
        <end position="101"/>
    </location>
</feature>
<proteinExistence type="inferred from homology"/>
<gene>
    <name evidence="1" type="primary">rpsJ</name>
    <name type="ordered locus">NFA_7320</name>
</gene>
<dbReference type="EMBL" id="AP006618">
    <property type="protein sequence ID" value="BAD55577.1"/>
    <property type="molecule type" value="Genomic_DNA"/>
</dbReference>
<dbReference type="RefSeq" id="WP_003938093.1">
    <property type="nucleotide sequence ID" value="NC_006361.1"/>
</dbReference>
<dbReference type="SMR" id="Q5Z1W4"/>
<dbReference type="STRING" id="247156.NFA_7320"/>
<dbReference type="GeneID" id="98053541"/>
<dbReference type="KEGG" id="nfa:NFA_7320"/>
<dbReference type="eggNOG" id="COG0051">
    <property type="taxonomic scope" value="Bacteria"/>
</dbReference>
<dbReference type="HOGENOM" id="CLU_122625_1_3_11"/>
<dbReference type="OrthoDB" id="9804464at2"/>
<dbReference type="Proteomes" id="UP000006820">
    <property type="component" value="Chromosome"/>
</dbReference>
<dbReference type="GO" id="GO:1990904">
    <property type="term" value="C:ribonucleoprotein complex"/>
    <property type="evidence" value="ECO:0007669"/>
    <property type="project" value="UniProtKB-KW"/>
</dbReference>
<dbReference type="GO" id="GO:0005840">
    <property type="term" value="C:ribosome"/>
    <property type="evidence" value="ECO:0007669"/>
    <property type="project" value="UniProtKB-KW"/>
</dbReference>
<dbReference type="GO" id="GO:0003735">
    <property type="term" value="F:structural constituent of ribosome"/>
    <property type="evidence" value="ECO:0007669"/>
    <property type="project" value="InterPro"/>
</dbReference>
<dbReference type="GO" id="GO:0000049">
    <property type="term" value="F:tRNA binding"/>
    <property type="evidence" value="ECO:0007669"/>
    <property type="project" value="UniProtKB-UniRule"/>
</dbReference>
<dbReference type="GO" id="GO:0006412">
    <property type="term" value="P:translation"/>
    <property type="evidence" value="ECO:0007669"/>
    <property type="project" value="UniProtKB-UniRule"/>
</dbReference>
<dbReference type="FunFam" id="3.30.70.600:FF:000001">
    <property type="entry name" value="30S ribosomal protein S10"/>
    <property type="match status" value="1"/>
</dbReference>
<dbReference type="Gene3D" id="3.30.70.600">
    <property type="entry name" value="Ribosomal protein S10 domain"/>
    <property type="match status" value="1"/>
</dbReference>
<dbReference type="HAMAP" id="MF_00508">
    <property type="entry name" value="Ribosomal_uS10"/>
    <property type="match status" value="1"/>
</dbReference>
<dbReference type="InterPro" id="IPR001848">
    <property type="entry name" value="Ribosomal_uS10"/>
</dbReference>
<dbReference type="InterPro" id="IPR018268">
    <property type="entry name" value="Ribosomal_uS10_CS"/>
</dbReference>
<dbReference type="InterPro" id="IPR027486">
    <property type="entry name" value="Ribosomal_uS10_dom"/>
</dbReference>
<dbReference type="InterPro" id="IPR036838">
    <property type="entry name" value="Ribosomal_uS10_dom_sf"/>
</dbReference>
<dbReference type="NCBIfam" id="NF001861">
    <property type="entry name" value="PRK00596.1"/>
    <property type="match status" value="1"/>
</dbReference>
<dbReference type="NCBIfam" id="TIGR01049">
    <property type="entry name" value="rpsJ_bact"/>
    <property type="match status" value="1"/>
</dbReference>
<dbReference type="PANTHER" id="PTHR11700">
    <property type="entry name" value="30S RIBOSOMAL PROTEIN S10 FAMILY MEMBER"/>
    <property type="match status" value="1"/>
</dbReference>
<dbReference type="Pfam" id="PF00338">
    <property type="entry name" value="Ribosomal_S10"/>
    <property type="match status" value="1"/>
</dbReference>
<dbReference type="PRINTS" id="PR00971">
    <property type="entry name" value="RIBOSOMALS10"/>
</dbReference>
<dbReference type="SMART" id="SM01403">
    <property type="entry name" value="Ribosomal_S10"/>
    <property type="match status" value="1"/>
</dbReference>
<dbReference type="SUPFAM" id="SSF54999">
    <property type="entry name" value="Ribosomal protein S10"/>
    <property type="match status" value="1"/>
</dbReference>
<dbReference type="PROSITE" id="PS00361">
    <property type="entry name" value="RIBOSOMAL_S10"/>
    <property type="match status" value="1"/>
</dbReference>
<protein>
    <recommendedName>
        <fullName evidence="1">Small ribosomal subunit protein uS10</fullName>
    </recommendedName>
    <alternativeName>
        <fullName evidence="2">30S ribosomal protein S10</fullName>
    </alternativeName>
</protein>
<keyword id="KW-1185">Reference proteome</keyword>
<keyword id="KW-0687">Ribonucleoprotein</keyword>
<keyword id="KW-0689">Ribosomal protein</keyword>
<accession>Q5Z1W4</accession>
<evidence type="ECO:0000255" key="1">
    <source>
        <dbReference type="HAMAP-Rule" id="MF_00508"/>
    </source>
</evidence>
<evidence type="ECO:0000305" key="2"/>
<sequence length="101" mass="11502">MAGQKIRIRLKAYDHEAIDASARKIVETVTRTGARVVGPVPLPTEKNVYCVIRSPHKYKDSREHFEMRTHKRLIDILDPTPKTVDALMRIDLPASVDVNIQ</sequence>